<name>CBNB_CUPNE</name>
<gene>
    <name evidence="3" type="primary">cbnB</name>
</gene>
<evidence type="ECO:0000250" key="1"/>
<evidence type="ECO:0000269" key="2">
    <source>
    </source>
</evidence>
<evidence type="ECO:0000303" key="3">
    <source>
    </source>
</evidence>
<evidence type="ECO:0000305" key="4"/>
<reference key="1">
    <citation type="journal article" date="1999" name="Appl. Environ. Microbiol.">
        <title>The chlorocatechol-catabolic transposon Tn5707 of Alcaligenes eutrophus NH9, carrying a gene cluster highly homologous to that in the 1,2,4-trichlorobenzene-degrading bacterium Pseudomonas sp. strain P51, confers the ability to grow on 3-chlorobenzoate.</title>
        <authorList>
            <person name="Ogawa N."/>
            <person name="Miyashita K."/>
        </authorList>
    </citation>
    <scope>NUCLEOTIDE SEQUENCE [GENOMIC DNA]</scope>
    <source>
        <strain evidence="2">NH9</strain>
    </source>
</reference>
<dbReference type="EC" id="5.5.1.7"/>
<dbReference type="EMBL" id="AB019032">
    <property type="protein sequence ID" value="BAA74531.1"/>
    <property type="molecule type" value="Genomic_DNA"/>
</dbReference>
<dbReference type="RefSeq" id="WP_011255151.1">
    <property type="nucleotide sequence ID" value="NZ_CP017760.1"/>
</dbReference>
<dbReference type="SMR" id="P83763"/>
<dbReference type="OrthoDB" id="5596677at2"/>
<dbReference type="UniPathway" id="UPA00083"/>
<dbReference type="GO" id="GO:0018850">
    <property type="term" value="F:chloromuconate cycloisomerase activity"/>
    <property type="evidence" value="ECO:0007669"/>
    <property type="project" value="UniProtKB-EC"/>
</dbReference>
<dbReference type="GO" id="GO:0030145">
    <property type="term" value="F:manganese ion binding"/>
    <property type="evidence" value="ECO:0007669"/>
    <property type="project" value="InterPro"/>
</dbReference>
<dbReference type="GO" id="GO:0018849">
    <property type="term" value="F:muconate cycloisomerase activity"/>
    <property type="evidence" value="ECO:0007669"/>
    <property type="project" value="InterPro"/>
</dbReference>
<dbReference type="GO" id="GO:0009063">
    <property type="term" value="P:amino acid catabolic process"/>
    <property type="evidence" value="ECO:0007669"/>
    <property type="project" value="InterPro"/>
</dbReference>
<dbReference type="CDD" id="cd03318">
    <property type="entry name" value="MLE"/>
    <property type="match status" value="1"/>
</dbReference>
<dbReference type="Gene3D" id="3.20.20.120">
    <property type="entry name" value="Enolase-like C-terminal domain"/>
    <property type="match status" value="1"/>
</dbReference>
<dbReference type="Gene3D" id="3.30.390.10">
    <property type="entry name" value="Enolase-like, N-terminal domain"/>
    <property type="match status" value="1"/>
</dbReference>
<dbReference type="InterPro" id="IPR013370">
    <property type="entry name" value="Chloromuconate_cycloisomerase"/>
</dbReference>
<dbReference type="InterPro" id="IPR036849">
    <property type="entry name" value="Enolase-like_C_sf"/>
</dbReference>
<dbReference type="InterPro" id="IPR029017">
    <property type="entry name" value="Enolase-like_N"/>
</dbReference>
<dbReference type="InterPro" id="IPR029065">
    <property type="entry name" value="Enolase_C-like"/>
</dbReference>
<dbReference type="InterPro" id="IPR018110">
    <property type="entry name" value="Mandel_Rmase/mucon_lact_enz_CS"/>
</dbReference>
<dbReference type="InterPro" id="IPR013342">
    <property type="entry name" value="Mandelate_racemase_C"/>
</dbReference>
<dbReference type="InterPro" id="IPR013341">
    <property type="entry name" value="Mandelate_racemase_N_dom"/>
</dbReference>
<dbReference type="NCBIfam" id="TIGR02534">
    <property type="entry name" value="mucon_cyclo"/>
    <property type="match status" value="1"/>
</dbReference>
<dbReference type="PANTHER" id="PTHR48073:SF2">
    <property type="entry name" value="O-SUCCINYLBENZOATE SYNTHASE"/>
    <property type="match status" value="1"/>
</dbReference>
<dbReference type="PANTHER" id="PTHR48073">
    <property type="entry name" value="O-SUCCINYLBENZOATE SYNTHASE-RELATED"/>
    <property type="match status" value="1"/>
</dbReference>
<dbReference type="Pfam" id="PF13378">
    <property type="entry name" value="MR_MLE_C"/>
    <property type="match status" value="1"/>
</dbReference>
<dbReference type="Pfam" id="PF02746">
    <property type="entry name" value="MR_MLE_N"/>
    <property type="match status" value="1"/>
</dbReference>
<dbReference type="SFLD" id="SFLDG01258">
    <property type="entry name" value="(chloro)muconate_cycloisomeras"/>
    <property type="match status" value="1"/>
</dbReference>
<dbReference type="SFLD" id="SFLDS00001">
    <property type="entry name" value="Enolase"/>
    <property type="match status" value="1"/>
</dbReference>
<dbReference type="SFLD" id="SFLDF00009">
    <property type="entry name" value="o-succinylbenzoate_synthase"/>
    <property type="match status" value="1"/>
</dbReference>
<dbReference type="SMART" id="SM00922">
    <property type="entry name" value="MR_MLE"/>
    <property type="match status" value="1"/>
</dbReference>
<dbReference type="SUPFAM" id="SSF51604">
    <property type="entry name" value="Enolase C-terminal domain-like"/>
    <property type="match status" value="1"/>
</dbReference>
<dbReference type="SUPFAM" id="SSF54826">
    <property type="entry name" value="Enolase N-terminal domain-like"/>
    <property type="match status" value="1"/>
</dbReference>
<dbReference type="PROSITE" id="PS00908">
    <property type="entry name" value="MR_MLE_1"/>
    <property type="match status" value="1"/>
</dbReference>
<dbReference type="PROSITE" id="PS00909">
    <property type="entry name" value="MR_MLE_2"/>
    <property type="match status" value="1"/>
</dbReference>
<geneLocation type="plasmid">
    <name>pENH91</name>
</geneLocation>
<proteinExistence type="inferred from homology"/>
<comment type="catalytic activity">
    <reaction evidence="4">
        <text>2-[(2R)-2-chloro-2,5-dihydro-5-oxofuryl]acetate = 3-chloro-cis,cis-muconate + H(+)</text>
        <dbReference type="Rhea" id="RHEA:11032"/>
        <dbReference type="ChEBI" id="CHEBI:15378"/>
        <dbReference type="ChEBI" id="CHEBI:17589"/>
        <dbReference type="ChEBI" id="CHEBI:85538"/>
        <dbReference type="EC" id="5.5.1.7"/>
    </reaction>
</comment>
<comment type="cofactor">
    <cofactor evidence="1">
        <name>Mn(2+)</name>
        <dbReference type="ChEBI" id="CHEBI:29035"/>
    </cofactor>
</comment>
<comment type="pathway">
    <text>Aromatic compound metabolism; 3-chlorocatechol degradation.</text>
</comment>
<comment type="similarity">
    <text evidence="4">Belongs to the mandelate racemase/muconate lactonizing enzyme family.</text>
</comment>
<keyword id="KW-0058">Aromatic hydrocarbons catabolism</keyword>
<keyword id="KW-0413">Isomerase</keyword>
<keyword id="KW-0464">Manganese</keyword>
<keyword id="KW-0479">Metal-binding</keyword>
<keyword id="KW-0614">Plasmid</keyword>
<sequence length="370" mass="39465">MKIEAISTTIVDVPTRRPLQMSFTTVHKQSYVIVQVTAGGLVGIGEGGSVGGPTWGSESAETIKVIIDNYLAPLLIGKDASNLSEARALMDRAVTGNLSAKAAIDIALHDLKARALNLSIADLIGGTMRKSIPIAWTLASGDTARDIDSALEMIEARRHNRFKVKLGARTPAQDLEHIRSIVKAVGDKASVRVDVNQGWDEQTASIWIPRLEEAGVELVEQPVPRANFGALRRLTEQNGVAILADESLSSLSSAFELARDRAVDAFSLKLCNMGGIANTLKVAAIAEAAGISSYGGTMLDSTVGTAAALHVYATLPSLPYGCELIGPWVLSDRLTQQDLEIKDFEVHLPVGSGLGVDLDHDKVRHYTRAA</sequence>
<organism>
    <name type="scientific">Cupriavidus necator</name>
    <name type="common">Alcaligenes eutrophus</name>
    <name type="synonym">Ralstonia eutropha</name>
    <dbReference type="NCBI Taxonomy" id="106590"/>
    <lineage>
        <taxon>Bacteria</taxon>
        <taxon>Pseudomonadati</taxon>
        <taxon>Pseudomonadota</taxon>
        <taxon>Betaproteobacteria</taxon>
        <taxon>Burkholderiales</taxon>
        <taxon>Burkholderiaceae</taxon>
        <taxon>Cupriavidus</taxon>
    </lineage>
</organism>
<accession>P83763</accession>
<accession>Q93T14</accession>
<accession>Q9WXC9</accession>
<protein>
    <recommendedName>
        <fullName>Chloromuconate cycloisomerase CbnB</fullName>
        <ecNumber>5.5.1.7</ecNumber>
    </recommendedName>
    <alternativeName>
        <fullName>Muconate cycloisomerase II CbnB</fullName>
    </alternativeName>
</protein>
<feature type="chain" id="PRO_0000171255" description="Chloromuconate cycloisomerase CbnB">
    <location>
        <begin position="1"/>
        <end position="370"/>
    </location>
</feature>
<feature type="active site" description="Proton acceptor" evidence="1">
    <location>
        <position position="165"/>
    </location>
</feature>
<feature type="active site" description="Proton donor" evidence="1">
    <location>
        <position position="323"/>
    </location>
</feature>
<feature type="binding site" evidence="1">
    <location>
        <position position="194"/>
    </location>
    <ligand>
        <name>Mn(2+)</name>
        <dbReference type="ChEBI" id="CHEBI:29035"/>
    </ligand>
</feature>
<feature type="binding site" evidence="1">
    <location>
        <position position="220"/>
    </location>
    <ligand>
        <name>Mn(2+)</name>
        <dbReference type="ChEBI" id="CHEBI:29035"/>
    </ligand>
</feature>
<feature type="binding site" evidence="1">
    <location>
        <position position="245"/>
    </location>
    <ligand>
        <name>Mn(2+)</name>
        <dbReference type="ChEBI" id="CHEBI:29035"/>
    </ligand>
</feature>